<comment type="function">
    <text evidence="1">Part of a membrane-bound complex that couples electron transfer with translocation of ions across the membrane. Required to maintain the reduced state of SoxR.</text>
</comment>
<comment type="cofactor">
    <cofactor evidence="1">
        <name>[4Fe-4S] cluster</name>
        <dbReference type="ChEBI" id="CHEBI:49883"/>
    </cofactor>
    <text evidence="1">Binds 2 [4Fe-4S] clusters per subunit.</text>
</comment>
<comment type="subunit">
    <text evidence="1">The complex is composed of six subunits: RsxA, RsxB, RsxC, RsxD, RsxE and RsxG.</text>
</comment>
<comment type="subcellular location">
    <subcellularLocation>
        <location evidence="1">Cell inner membrane</location>
        <topology evidence="1">Peripheral membrane protein</topology>
    </subcellularLocation>
</comment>
<comment type="similarity">
    <text evidence="1">Belongs to the 4Fe4S bacterial-type ferredoxin family. RnfC subfamily.</text>
</comment>
<keyword id="KW-0004">4Fe-4S</keyword>
<keyword id="KW-0997">Cell inner membrane</keyword>
<keyword id="KW-1003">Cell membrane</keyword>
<keyword id="KW-0249">Electron transport</keyword>
<keyword id="KW-0408">Iron</keyword>
<keyword id="KW-0411">Iron-sulfur</keyword>
<keyword id="KW-0472">Membrane</keyword>
<keyword id="KW-0479">Metal-binding</keyword>
<keyword id="KW-1185">Reference proteome</keyword>
<keyword id="KW-0677">Repeat</keyword>
<keyword id="KW-1278">Translocase</keyword>
<keyword id="KW-0813">Transport</keyword>
<protein>
    <recommendedName>
        <fullName evidence="1">Ion-translocating oxidoreductase complex subunit C</fullName>
        <ecNumber evidence="1">7.-.-.-</ecNumber>
    </recommendedName>
    <alternativeName>
        <fullName evidence="1">Rsx electron transport complex subunit C</fullName>
    </alternativeName>
</protein>
<reference key="1">
    <citation type="submission" date="2008-05" db="EMBL/GenBank/DDBJ databases">
        <title>Complete sequence of Shigella boydii serotype 18 strain BS512.</title>
        <authorList>
            <person name="Rasko D.A."/>
            <person name="Rosovitz M."/>
            <person name="Maurelli A.T."/>
            <person name="Myers G."/>
            <person name="Seshadri R."/>
            <person name="Cer R."/>
            <person name="Jiang L."/>
            <person name="Ravel J."/>
            <person name="Sebastian Y."/>
        </authorList>
    </citation>
    <scope>NUCLEOTIDE SEQUENCE [LARGE SCALE GENOMIC DNA]</scope>
    <source>
        <strain>CDC 3083-94 / BS512</strain>
    </source>
</reference>
<feature type="chain" id="PRO_1000125369" description="Ion-translocating oxidoreductase complex subunit C">
    <location>
        <begin position="1"/>
        <end position="708"/>
    </location>
</feature>
<feature type="domain" description="4Fe-4S ferredoxin-type 1" evidence="1">
    <location>
        <begin position="369"/>
        <end position="397"/>
    </location>
</feature>
<feature type="domain" description="4Fe-4S ferredoxin-type 2" evidence="1">
    <location>
        <begin position="407"/>
        <end position="436"/>
    </location>
</feature>
<feature type="region of interest" description="Disordered" evidence="2">
    <location>
        <begin position="663"/>
        <end position="684"/>
    </location>
</feature>
<feature type="binding site" evidence="1">
    <location>
        <position position="377"/>
    </location>
    <ligand>
        <name>[4Fe-4S] cluster</name>
        <dbReference type="ChEBI" id="CHEBI:49883"/>
        <label>1</label>
    </ligand>
</feature>
<feature type="binding site" evidence="1">
    <location>
        <position position="380"/>
    </location>
    <ligand>
        <name>[4Fe-4S] cluster</name>
        <dbReference type="ChEBI" id="CHEBI:49883"/>
        <label>1</label>
    </ligand>
</feature>
<feature type="binding site" evidence="1">
    <location>
        <position position="383"/>
    </location>
    <ligand>
        <name>[4Fe-4S] cluster</name>
        <dbReference type="ChEBI" id="CHEBI:49883"/>
        <label>1</label>
    </ligand>
</feature>
<feature type="binding site" evidence="1">
    <location>
        <position position="387"/>
    </location>
    <ligand>
        <name>[4Fe-4S] cluster</name>
        <dbReference type="ChEBI" id="CHEBI:49883"/>
        <label>2</label>
    </ligand>
</feature>
<feature type="binding site" evidence="1">
    <location>
        <position position="416"/>
    </location>
    <ligand>
        <name>[4Fe-4S] cluster</name>
        <dbReference type="ChEBI" id="CHEBI:49883"/>
        <label>2</label>
    </ligand>
</feature>
<feature type="binding site" evidence="1">
    <location>
        <position position="419"/>
    </location>
    <ligand>
        <name>[4Fe-4S] cluster</name>
        <dbReference type="ChEBI" id="CHEBI:49883"/>
        <label>2</label>
    </ligand>
</feature>
<feature type="binding site" evidence="1">
    <location>
        <position position="422"/>
    </location>
    <ligand>
        <name>[4Fe-4S] cluster</name>
        <dbReference type="ChEBI" id="CHEBI:49883"/>
        <label>2</label>
    </ligand>
</feature>
<feature type="binding site" evidence="1">
    <location>
        <position position="426"/>
    </location>
    <ligand>
        <name>[4Fe-4S] cluster</name>
        <dbReference type="ChEBI" id="CHEBI:49883"/>
        <label>1</label>
    </ligand>
</feature>
<name>RSXC_SHIB3</name>
<dbReference type="EC" id="7.-.-.-" evidence="1"/>
<dbReference type="EMBL" id="CP001063">
    <property type="protein sequence ID" value="ACD08446.1"/>
    <property type="molecule type" value="Genomic_DNA"/>
</dbReference>
<dbReference type="RefSeq" id="WP_000915733.1">
    <property type="nucleotide sequence ID" value="NC_010658.1"/>
</dbReference>
<dbReference type="SMR" id="B2U2C8"/>
<dbReference type="STRING" id="344609.SbBS512_E1818"/>
<dbReference type="KEGG" id="sbc:SbBS512_E1818"/>
<dbReference type="HOGENOM" id="CLU_010808_2_1_6"/>
<dbReference type="Proteomes" id="UP000001030">
    <property type="component" value="Chromosome"/>
</dbReference>
<dbReference type="GO" id="GO:0005886">
    <property type="term" value="C:plasma membrane"/>
    <property type="evidence" value="ECO:0007669"/>
    <property type="project" value="UniProtKB-SubCell"/>
</dbReference>
<dbReference type="GO" id="GO:0051539">
    <property type="term" value="F:4 iron, 4 sulfur cluster binding"/>
    <property type="evidence" value="ECO:0007669"/>
    <property type="project" value="UniProtKB-KW"/>
</dbReference>
<dbReference type="GO" id="GO:0009055">
    <property type="term" value="F:electron transfer activity"/>
    <property type="evidence" value="ECO:0007669"/>
    <property type="project" value="InterPro"/>
</dbReference>
<dbReference type="GO" id="GO:0046872">
    <property type="term" value="F:metal ion binding"/>
    <property type="evidence" value="ECO:0007669"/>
    <property type="project" value="UniProtKB-KW"/>
</dbReference>
<dbReference type="GO" id="GO:0022900">
    <property type="term" value="P:electron transport chain"/>
    <property type="evidence" value="ECO:0007669"/>
    <property type="project" value="UniProtKB-UniRule"/>
</dbReference>
<dbReference type="Gene3D" id="3.30.70.20">
    <property type="match status" value="1"/>
</dbReference>
<dbReference type="Gene3D" id="3.40.50.11540">
    <property type="entry name" value="NADH-ubiquinone oxidoreductase 51kDa subunit"/>
    <property type="match status" value="1"/>
</dbReference>
<dbReference type="HAMAP" id="MF_00461">
    <property type="entry name" value="RsxC_RnfC"/>
    <property type="match status" value="1"/>
</dbReference>
<dbReference type="InterPro" id="IPR017896">
    <property type="entry name" value="4Fe4S_Fe-S-bd"/>
</dbReference>
<dbReference type="InterPro" id="IPR017900">
    <property type="entry name" value="4Fe4S_Fe_S_CS"/>
</dbReference>
<dbReference type="InterPro" id="IPR010208">
    <property type="entry name" value="Ion_transpt_RnfC/RsxC"/>
</dbReference>
<dbReference type="InterPro" id="IPR011538">
    <property type="entry name" value="Nuo51_FMN-bd"/>
</dbReference>
<dbReference type="InterPro" id="IPR037225">
    <property type="entry name" value="Nuo51_FMN-bd_sf"/>
</dbReference>
<dbReference type="InterPro" id="IPR026902">
    <property type="entry name" value="RnfC_N"/>
</dbReference>
<dbReference type="InterPro" id="IPR019554">
    <property type="entry name" value="Soluble_ligand-bd"/>
</dbReference>
<dbReference type="NCBIfam" id="NF003454">
    <property type="entry name" value="PRK05035.1"/>
    <property type="match status" value="1"/>
</dbReference>
<dbReference type="NCBIfam" id="TIGR01945">
    <property type="entry name" value="rnfC"/>
    <property type="match status" value="1"/>
</dbReference>
<dbReference type="PANTHER" id="PTHR43034">
    <property type="entry name" value="ION-TRANSLOCATING OXIDOREDUCTASE COMPLEX SUBUNIT C"/>
    <property type="match status" value="1"/>
</dbReference>
<dbReference type="PANTHER" id="PTHR43034:SF2">
    <property type="entry name" value="ION-TRANSLOCATING OXIDOREDUCTASE COMPLEX SUBUNIT C"/>
    <property type="match status" value="1"/>
</dbReference>
<dbReference type="Pfam" id="PF01512">
    <property type="entry name" value="Complex1_51K"/>
    <property type="match status" value="1"/>
</dbReference>
<dbReference type="Pfam" id="PF12838">
    <property type="entry name" value="Fer4_7"/>
    <property type="match status" value="1"/>
</dbReference>
<dbReference type="Pfam" id="PF13375">
    <property type="entry name" value="RnfC_N"/>
    <property type="match status" value="1"/>
</dbReference>
<dbReference type="Pfam" id="PF10531">
    <property type="entry name" value="SLBB"/>
    <property type="match status" value="1"/>
</dbReference>
<dbReference type="SUPFAM" id="SSF46548">
    <property type="entry name" value="alpha-helical ferredoxin"/>
    <property type="match status" value="1"/>
</dbReference>
<dbReference type="SUPFAM" id="SSF142019">
    <property type="entry name" value="Nqo1 FMN-binding domain-like"/>
    <property type="match status" value="1"/>
</dbReference>
<dbReference type="PROSITE" id="PS00198">
    <property type="entry name" value="4FE4S_FER_1"/>
    <property type="match status" value="2"/>
</dbReference>
<dbReference type="PROSITE" id="PS51379">
    <property type="entry name" value="4FE4S_FER_2"/>
    <property type="match status" value="2"/>
</dbReference>
<accession>B2U2C8</accession>
<sequence>MLKLFSAFRKNKIWDFNGGIHPPEMKTQSNGTPLRQVPLAQRFVIPLKQHIGAEGELCVSVGDKVLRGQPLTRGRGKMLPVHAPTSGTVTAIAPHSTAHPSALAELSVIIDADGEDCWIPRDGWADYRTRSREELIERIHQFGVAGLGGAGFPTGVKLQGGGDKIETLIINAAECEPYITADDRLMQDCAAQLVEGIRILAHILQPREILIGIEDNKPQAISMLRAVLADSNDISLRVIPTKYPSGGAKQLTYILTGKQVPHGGRSSDIGVLMQNVGTAYAVKRAVIDGEPITERVVTLTGEAIARPGNVWARLGTPVRHLLNDARFCPSADQMVIMGGPLMGFTLPWLDVPVVKITNCLLAPSANELGEPQEEQSCIRCSACADACPADLLPQQLYWFSKGQQHDKATTHNIADCIECGACAWVCPSNIPLVQYFRQEKAEIAAIRQEEKRAAEAKARFEARQARLEREKAARLERHKSAAVQPAAKDKDAIAAALARVKEKQAQATQPIVIKAGERPDNSAIIAAREARKAQARAKQAELQQTNDAATVADPRKTAVEAAIARAKARKLEQQQANAEPEEQVDPRKAAIEAAIARAKARKLEQQQANAEPEEQVDPRKAAVEAAIARAKARKLEQQQANAVPEEQVDPRKAAVEAAIARAKARKLEQQQTNAEPEEQVDPRKAAVAAAIARAQAKKAAQQKVVNED</sequence>
<organism>
    <name type="scientific">Shigella boydii serotype 18 (strain CDC 3083-94 / BS512)</name>
    <dbReference type="NCBI Taxonomy" id="344609"/>
    <lineage>
        <taxon>Bacteria</taxon>
        <taxon>Pseudomonadati</taxon>
        <taxon>Pseudomonadota</taxon>
        <taxon>Gammaproteobacteria</taxon>
        <taxon>Enterobacterales</taxon>
        <taxon>Enterobacteriaceae</taxon>
        <taxon>Shigella</taxon>
    </lineage>
</organism>
<gene>
    <name evidence="1" type="primary">rsxC</name>
    <name type="synonym">rnfC</name>
    <name type="ordered locus">SbBS512_E1818</name>
</gene>
<evidence type="ECO:0000255" key="1">
    <source>
        <dbReference type="HAMAP-Rule" id="MF_00461"/>
    </source>
</evidence>
<evidence type="ECO:0000256" key="2">
    <source>
        <dbReference type="SAM" id="MobiDB-lite"/>
    </source>
</evidence>
<proteinExistence type="inferred from homology"/>